<reference key="1">
    <citation type="journal article" date="2003" name="J. Bacteriol.">
        <title>Complete genome sequence of the oral pathogenic bacterium Porphyromonas gingivalis strain W83.</title>
        <authorList>
            <person name="Nelson K.E."/>
            <person name="Fleischmann R.D."/>
            <person name="DeBoy R.T."/>
            <person name="Paulsen I.T."/>
            <person name="Fouts D.E."/>
            <person name="Eisen J.A."/>
            <person name="Daugherty S.C."/>
            <person name="Dodson R.J."/>
            <person name="Durkin A.S."/>
            <person name="Gwinn M.L."/>
            <person name="Haft D.H."/>
            <person name="Kolonay J.F."/>
            <person name="Nelson W.C."/>
            <person name="Mason T.M."/>
            <person name="Tallon L."/>
            <person name="Gray J."/>
            <person name="Granger D."/>
            <person name="Tettelin H."/>
            <person name="Dong H."/>
            <person name="Galvin J.L."/>
            <person name="Duncan M.J."/>
            <person name="Dewhirst F.E."/>
            <person name="Fraser C.M."/>
        </authorList>
    </citation>
    <scope>NUCLEOTIDE SEQUENCE [LARGE SCALE GENOMIC DNA]</scope>
    <source>
        <strain>ATCC BAA-308 / W83</strain>
    </source>
</reference>
<protein>
    <recommendedName>
        <fullName>Chaperone protein DnaK</fullName>
    </recommendedName>
    <alternativeName>
        <fullName>HSP70</fullName>
    </alternativeName>
    <alternativeName>
        <fullName>Heat shock 70 kDa protein</fullName>
    </alternativeName>
    <alternativeName>
        <fullName>Heat shock protein 70</fullName>
    </alternativeName>
</protein>
<sequence>MGKIIGIDLGTTNSCVSVLEGNEPIVITNSEGKRTTPSVVAFVDGGERKVGDPAKRQAITNPTKTIYSIKRFMGETYDQVSREVERVPFKVVRGDNNTPRVDIDGRLYTPQEISAMILQKMKKTAEDYLGQEVTEAVITVPAYFNDAQRQATKEAGEIAGLKVRRIVNEPTAASLAYGLDKSNKDMKIAVFDLGGGTFDISILELGDGVFEVKSTNGDTHLGGDDFDHVIIDWLAEEFKSQEGVDLRQDPMAMQRLKEAAEKAKIELSSTSSTEINLPYIMPVNGIPKHLVMTLTRAKFEQLADRLIQACVAPCETALKDAGMSRGDIDEVILVGGSTRIPAIQEIVEKIFGKAPSKGVNPDEVVAVGAAIQGGVLTGEVKDVLLLDVTPLSLGIETMGGVMTRLIDANTTIPTKKSEIFTTAVDNQPSVEIHVLQGERSLAKDNKSIGRFNLDGIAPAPRQTPQIEVTFDIDANGILNVTAHDKATGKKQNIRIEASSGLSDDEIKRMKEEAQANAEADKKEKERIDKINQADSMIFQTEKQLKELGDKFPADKKAPIDTALDKLKEAHKAQDVAAIDTAMAELQTALSAAGEELYKNAGAAQGGAQPGPDFGGAQGPSAGDQPSDDKNVTDVDFEEVK</sequence>
<evidence type="ECO:0000250" key="1"/>
<evidence type="ECO:0000256" key="2">
    <source>
        <dbReference type="SAM" id="MobiDB-lite"/>
    </source>
</evidence>
<evidence type="ECO:0000305" key="3"/>
<name>DNAK_PORGI</name>
<feature type="chain" id="PRO_0000078509" description="Chaperone protein DnaK">
    <location>
        <begin position="1"/>
        <end position="640"/>
    </location>
</feature>
<feature type="region of interest" description="Disordered" evidence="2">
    <location>
        <begin position="600"/>
        <end position="640"/>
    </location>
</feature>
<feature type="compositionally biased region" description="Gly residues" evidence="2">
    <location>
        <begin position="603"/>
        <end position="617"/>
    </location>
</feature>
<feature type="compositionally biased region" description="Basic and acidic residues" evidence="2">
    <location>
        <begin position="626"/>
        <end position="640"/>
    </location>
</feature>
<feature type="modified residue" description="Phosphothreonine; by autocatalysis" evidence="1">
    <location>
        <position position="197"/>
    </location>
</feature>
<comment type="function">
    <text evidence="1">Acts as a chaperone.</text>
</comment>
<comment type="induction">
    <text evidence="1">By stress conditions e.g. heat shock (By similarity).</text>
</comment>
<comment type="similarity">
    <text evidence="3">Belongs to the heat shock protein 70 family.</text>
</comment>
<accession>P0C937</accession>
<accession>Q9ZAD3</accession>
<gene>
    <name type="primary">dnaK</name>
    <name type="ordered locus">PG_1208</name>
</gene>
<dbReference type="EMBL" id="AE015924">
    <property type="protein sequence ID" value="AAQ66298.1"/>
    <property type="molecule type" value="Genomic_DNA"/>
</dbReference>
<dbReference type="RefSeq" id="WP_004583505.1">
    <property type="nucleotide sequence ID" value="NC_002950.2"/>
</dbReference>
<dbReference type="SMR" id="P0C937"/>
<dbReference type="STRING" id="242619.PG_1208"/>
<dbReference type="EnsemblBacteria" id="AAQ66298">
    <property type="protein sequence ID" value="AAQ66298"/>
    <property type="gene ID" value="PG_1208"/>
</dbReference>
<dbReference type="KEGG" id="pgi:PG_1208"/>
<dbReference type="PATRIC" id="fig|242619.8.peg.1119"/>
<dbReference type="eggNOG" id="COG0443">
    <property type="taxonomic scope" value="Bacteria"/>
</dbReference>
<dbReference type="HOGENOM" id="CLU_005965_2_4_10"/>
<dbReference type="BioCyc" id="PGIN242619:G1G02-1122-MONOMER"/>
<dbReference type="Proteomes" id="UP000000588">
    <property type="component" value="Chromosome"/>
</dbReference>
<dbReference type="GO" id="GO:0005524">
    <property type="term" value="F:ATP binding"/>
    <property type="evidence" value="ECO:0007669"/>
    <property type="project" value="UniProtKB-UniRule"/>
</dbReference>
<dbReference type="GO" id="GO:0140662">
    <property type="term" value="F:ATP-dependent protein folding chaperone"/>
    <property type="evidence" value="ECO:0007669"/>
    <property type="project" value="InterPro"/>
</dbReference>
<dbReference type="GO" id="GO:0051082">
    <property type="term" value="F:unfolded protein binding"/>
    <property type="evidence" value="ECO:0007669"/>
    <property type="project" value="InterPro"/>
</dbReference>
<dbReference type="CDD" id="cd10234">
    <property type="entry name" value="ASKHA_NBD_HSP70_DnaK-like"/>
    <property type="match status" value="1"/>
</dbReference>
<dbReference type="FunFam" id="2.60.34.10:FF:000014">
    <property type="entry name" value="Chaperone protein DnaK HSP70"/>
    <property type="match status" value="1"/>
</dbReference>
<dbReference type="FunFam" id="3.30.420.40:FF:000020">
    <property type="entry name" value="Chaperone protein HscA homolog"/>
    <property type="match status" value="1"/>
</dbReference>
<dbReference type="FunFam" id="1.20.1270.10:FF:000001">
    <property type="entry name" value="Molecular chaperone DnaK"/>
    <property type="match status" value="1"/>
</dbReference>
<dbReference type="FunFam" id="3.30.420.40:FF:000004">
    <property type="entry name" value="Molecular chaperone DnaK"/>
    <property type="match status" value="1"/>
</dbReference>
<dbReference type="FunFam" id="3.90.640.10:FF:000003">
    <property type="entry name" value="Molecular chaperone DnaK"/>
    <property type="match status" value="1"/>
</dbReference>
<dbReference type="Gene3D" id="1.20.1270.10">
    <property type="match status" value="1"/>
</dbReference>
<dbReference type="Gene3D" id="3.30.420.40">
    <property type="match status" value="2"/>
</dbReference>
<dbReference type="Gene3D" id="3.90.640.10">
    <property type="entry name" value="Actin, Chain A, domain 4"/>
    <property type="match status" value="1"/>
</dbReference>
<dbReference type="Gene3D" id="2.60.34.10">
    <property type="entry name" value="Substrate Binding Domain Of DNAk, Chain A, domain 1"/>
    <property type="match status" value="1"/>
</dbReference>
<dbReference type="HAMAP" id="MF_00332">
    <property type="entry name" value="DnaK"/>
    <property type="match status" value="1"/>
</dbReference>
<dbReference type="InterPro" id="IPR043129">
    <property type="entry name" value="ATPase_NBD"/>
</dbReference>
<dbReference type="InterPro" id="IPR012725">
    <property type="entry name" value="Chaperone_DnaK"/>
</dbReference>
<dbReference type="InterPro" id="IPR018181">
    <property type="entry name" value="Heat_shock_70_CS"/>
</dbReference>
<dbReference type="InterPro" id="IPR029048">
    <property type="entry name" value="HSP70_C_sf"/>
</dbReference>
<dbReference type="InterPro" id="IPR029047">
    <property type="entry name" value="HSP70_peptide-bd_sf"/>
</dbReference>
<dbReference type="InterPro" id="IPR013126">
    <property type="entry name" value="Hsp_70_fam"/>
</dbReference>
<dbReference type="NCBIfam" id="NF001413">
    <property type="entry name" value="PRK00290.1"/>
    <property type="match status" value="1"/>
</dbReference>
<dbReference type="NCBIfam" id="NF003520">
    <property type="entry name" value="PRK05183.1"/>
    <property type="match status" value="1"/>
</dbReference>
<dbReference type="NCBIfam" id="TIGR02350">
    <property type="entry name" value="prok_dnaK"/>
    <property type="match status" value="1"/>
</dbReference>
<dbReference type="PANTHER" id="PTHR19375">
    <property type="entry name" value="HEAT SHOCK PROTEIN 70KDA"/>
    <property type="match status" value="1"/>
</dbReference>
<dbReference type="Pfam" id="PF00012">
    <property type="entry name" value="HSP70"/>
    <property type="match status" value="1"/>
</dbReference>
<dbReference type="PRINTS" id="PR00301">
    <property type="entry name" value="HEATSHOCK70"/>
</dbReference>
<dbReference type="SUPFAM" id="SSF53067">
    <property type="entry name" value="Actin-like ATPase domain"/>
    <property type="match status" value="2"/>
</dbReference>
<dbReference type="SUPFAM" id="SSF100920">
    <property type="entry name" value="Heat shock protein 70kD (HSP70), peptide-binding domain"/>
    <property type="match status" value="1"/>
</dbReference>
<dbReference type="PROSITE" id="PS00297">
    <property type="entry name" value="HSP70_1"/>
    <property type="match status" value="1"/>
</dbReference>
<dbReference type="PROSITE" id="PS00329">
    <property type="entry name" value="HSP70_2"/>
    <property type="match status" value="1"/>
</dbReference>
<dbReference type="PROSITE" id="PS01036">
    <property type="entry name" value="HSP70_3"/>
    <property type="match status" value="1"/>
</dbReference>
<keyword id="KW-0067">ATP-binding</keyword>
<keyword id="KW-0143">Chaperone</keyword>
<keyword id="KW-0547">Nucleotide-binding</keyword>
<keyword id="KW-0597">Phosphoprotein</keyword>
<keyword id="KW-1185">Reference proteome</keyword>
<keyword id="KW-0346">Stress response</keyword>
<proteinExistence type="inferred from homology"/>
<organism>
    <name type="scientific">Porphyromonas gingivalis (strain ATCC BAA-308 / W83)</name>
    <dbReference type="NCBI Taxonomy" id="242619"/>
    <lineage>
        <taxon>Bacteria</taxon>
        <taxon>Pseudomonadati</taxon>
        <taxon>Bacteroidota</taxon>
        <taxon>Bacteroidia</taxon>
        <taxon>Bacteroidales</taxon>
        <taxon>Porphyromonadaceae</taxon>
        <taxon>Porphyromonas</taxon>
    </lineage>
</organism>